<dbReference type="EC" id="6.3.1.2" evidence="1"/>
<dbReference type="EMBL" id="M57275">
    <property type="protein sequence ID" value="AAA62673.1"/>
    <property type="molecule type" value="Genomic_DNA"/>
</dbReference>
<dbReference type="PIR" id="A37153">
    <property type="entry name" value="AJAVQ"/>
</dbReference>
<dbReference type="RefSeq" id="WP_012703060.1">
    <property type="nucleotide sequence ID" value="NZ_FPKM01000073.1"/>
</dbReference>
<dbReference type="SMR" id="P22248"/>
<dbReference type="GeneID" id="88187467"/>
<dbReference type="OMA" id="PHPHEFE"/>
<dbReference type="GO" id="GO:0005737">
    <property type="term" value="C:cytoplasm"/>
    <property type="evidence" value="ECO:0007669"/>
    <property type="project" value="UniProtKB-SubCell"/>
</dbReference>
<dbReference type="GO" id="GO:0016020">
    <property type="term" value="C:membrane"/>
    <property type="evidence" value="ECO:0007669"/>
    <property type="project" value="TreeGrafter"/>
</dbReference>
<dbReference type="GO" id="GO:0005524">
    <property type="term" value="F:ATP binding"/>
    <property type="evidence" value="ECO:0007669"/>
    <property type="project" value="UniProtKB-KW"/>
</dbReference>
<dbReference type="GO" id="GO:0004356">
    <property type="term" value="F:glutamine synthetase activity"/>
    <property type="evidence" value="ECO:0007669"/>
    <property type="project" value="UniProtKB-EC"/>
</dbReference>
<dbReference type="GO" id="GO:0046872">
    <property type="term" value="F:metal ion binding"/>
    <property type="evidence" value="ECO:0007669"/>
    <property type="project" value="UniProtKB-KW"/>
</dbReference>
<dbReference type="GO" id="GO:0006542">
    <property type="term" value="P:glutamine biosynthetic process"/>
    <property type="evidence" value="ECO:0007669"/>
    <property type="project" value="InterPro"/>
</dbReference>
<dbReference type="GO" id="GO:0009399">
    <property type="term" value="P:nitrogen fixation"/>
    <property type="evidence" value="ECO:0007669"/>
    <property type="project" value="UniProtKB-KW"/>
</dbReference>
<dbReference type="GO" id="GO:0019740">
    <property type="term" value="P:nitrogen utilization"/>
    <property type="evidence" value="ECO:0007669"/>
    <property type="project" value="TreeGrafter"/>
</dbReference>
<dbReference type="FunFam" id="3.10.20.70:FF:000001">
    <property type="entry name" value="Glutamine synthetase"/>
    <property type="match status" value="1"/>
</dbReference>
<dbReference type="FunFam" id="3.30.590.10:FF:000001">
    <property type="entry name" value="Glutamine synthetase"/>
    <property type="match status" value="1"/>
</dbReference>
<dbReference type="Gene3D" id="3.10.20.70">
    <property type="entry name" value="Glutamine synthetase, N-terminal domain"/>
    <property type="match status" value="1"/>
</dbReference>
<dbReference type="Gene3D" id="3.30.590.10">
    <property type="entry name" value="Glutamine synthetase/guanido kinase, catalytic domain"/>
    <property type="match status" value="1"/>
</dbReference>
<dbReference type="InterPro" id="IPR008147">
    <property type="entry name" value="Gln_synt_N"/>
</dbReference>
<dbReference type="InterPro" id="IPR036651">
    <property type="entry name" value="Gln_synt_N_sf"/>
</dbReference>
<dbReference type="InterPro" id="IPR014746">
    <property type="entry name" value="Gln_synth/guanido_kin_cat_dom"/>
</dbReference>
<dbReference type="InterPro" id="IPR008146">
    <property type="entry name" value="Gln_synth_cat_dom"/>
</dbReference>
<dbReference type="InterPro" id="IPR027303">
    <property type="entry name" value="Gln_synth_gly_rich_site"/>
</dbReference>
<dbReference type="InterPro" id="IPR004809">
    <property type="entry name" value="Gln_synth_I"/>
</dbReference>
<dbReference type="InterPro" id="IPR001637">
    <property type="entry name" value="Gln_synth_I_adenylation_site"/>
</dbReference>
<dbReference type="InterPro" id="IPR027302">
    <property type="entry name" value="Gln_synth_N_conserv_site"/>
</dbReference>
<dbReference type="NCBIfam" id="TIGR00653">
    <property type="entry name" value="GlnA"/>
    <property type="match status" value="1"/>
</dbReference>
<dbReference type="NCBIfam" id="NF007006">
    <property type="entry name" value="PRK09469.1"/>
    <property type="match status" value="1"/>
</dbReference>
<dbReference type="PANTHER" id="PTHR43407">
    <property type="entry name" value="GLUTAMINE SYNTHETASE"/>
    <property type="match status" value="1"/>
</dbReference>
<dbReference type="PANTHER" id="PTHR43407:SF2">
    <property type="entry name" value="GLUTAMINE SYNTHETASE"/>
    <property type="match status" value="1"/>
</dbReference>
<dbReference type="Pfam" id="PF00120">
    <property type="entry name" value="Gln-synt_C"/>
    <property type="match status" value="1"/>
</dbReference>
<dbReference type="Pfam" id="PF03951">
    <property type="entry name" value="Gln-synt_N"/>
    <property type="match status" value="1"/>
</dbReference>
<dbReference type="SMART" id="SM01230">
    <property type="entry name" value="Gln-synt_C"/>
    <property type="match status" value="1"/>
</dbReference>
<dbReference type="SUPFAM" id="SSF54368">
    <property type="entry name" value="Glutamine synthetase, N-terminal domain"/>
    <property type="match status" value="1"/>
</dbReference>
<dbReference type="SUPFAM" id="SSF55931">
    <property type="entry name" value="Glutamine synthetase/guanido kinase"/>
    <property type="match status" value="1"/>
</dbReference>
<dbReference type="PROSITE" id="PS00180">
    <property type="entry name" value="GLNA_1"/>
    <property type="match status" value="1"/>
</dbReference>
<dbReference type="PROSITE" id="PS00182">
    <property type="entry name" value="GLNA_ADENYLATION"/>
    <property type="match status" value="1"/>
</dbReference>
<dbReference type="PROSITE" id="PS00181">
    <property type="entry name" value="GLNA_ATP"/>
    <property type="match status" value="1"/>
</dbReference>
<dbReference type="PROSITE" id="PS51986">
    <property type="entry name" value="GS_BETA_GRASP"/>
    <property type="match status" value="1"/>
</dbReference>
<dbReference type="PROSITE" id="PS51987">
    <property type="entry name" value="GS_CATALYTIC"/>
    <property type="match status" value="1"/>
</dbReference>
<protein>
    <recommendedName>
        <fullName evidence="1">Glutamine synthetase</fullName>
        <shortName evidence="1">GS</shortName>
        <ecNumber evidence="1">6.3.1.2</ecNumber>
    </recommendedName>
    <alternativeName>
        <fullName evidence="8">Glutamate--ammonia ligase</fullName>
    </alternativeName>
    <alternativeName>
        <fullName evidence="1">Glutamine synthetase I beta</fullName>
        <shortName evidence="1">GSI beta</shortName>
    </alternativeName>
</protein>
<keyword id="KW-0067">ATP-binding</keyword>
<keyword id="KW-0963">Cytoplasm</keyword>
<keyword id="KW-0436">Ligase</keyword>
<keyword id="KW-0460">Magnesium</keyword>
<keyword id="KW-0479">Metal-binding</keyword>
<keyword id="KW-0535">Nitrogen fixation</keyword>
<keyword id="KW-0547">Nucleotide-binding</keyword>
<keyword id="KW-0597">Phosphoprotein</keyword>
<sequence length="467" mass="51746">MSKSLQLIKEHDVKWIDLRFTDTKGKQQHVTMPARDVDDDFFEYGKMFDGSSIAGWKGIEASDMILMPDDSTAVLDPFTEEPTLIIVCDIIEPSTMQGYDRDPRAIARRAEEYLKSTGIGDTAFFGPEPEFFIFDEVKYKSDISGSMFKIFSEQAAWNTDADFEGGNKGHRPGVKGGYFPVPPVDHDHEIRTAMCNALEEMGLKVEVHHHEVATAGQNEIGVSFNTLVAKADEVQTLKYCVHNVADAYGKTVTFMPKPLYGDNGSGMHVHMSIAKDGKNTFAGEGYAGLSDTALYFIGGIIKHGKALNGFTNPSTNSYKRLVPGFEAPVMLAYSARNRSASIRIPYVNSPKARRIEARFPDPSANPYLAFAALLMAGLDGIQNKIHPGDAADKNLYDLPPEEAKEIPQVCGSLKEALEELDKGRAFLTKGGVFSDDFIDAYLELKSEEEIKVRTFVHPLEYDLYYSV</sequence>
<accession>P22248</accession>
<feature type="chain" id="PRO_0000153231" description="Glutamine synthetase">
    <location>
        <begin position="1"/>
        <end position="467"/>
    </location>
</feature>
<feature type="domain" description="GS beta-grasp" evidence="6">
    <location>
        <begin position="11"/>
        <end position="95"/>
    </location>
</feature>
<feature type="domain" description="GS catalytic" evidence="7">
    <location>
        <begin position="103"/>
        <end position="467"/>
    </location>
</feature>
<feature type="binding site" evidence="4">
    <location>
        <position position="128"/>
    </location>
    <ligand>
        <name>Mg(2+)</name>
        <dbReference type="ChEBI" id="CHEBI:18420"/>
        <label>1</label>
    </ligand>
</feature>
<feature type="binding site" evidence="4">
    <location>
        <position position="130"/>
    </location>
    <ligand>
        <name>Mg(2+)</name>
        <dbReference type="ChEBI" id="CHEBI:18420"/>
        <label>2</label>
    </ligand>
</feature>
<feature type="binding site" evidence="1">
    <location>
        <position position="206"/>
    </location>
    <ligand>
        <name>ATP</name>
        <dbReference type="ChEBI" id="CHEBI:30616"/>
    </ligand>
</feature>
<feature type="binding site" evidence="4">
    <location>
        <position position="211"/>
    </location>
    <ligand>
        <name>Mg(2+)</name>
        <dbReference type="ChEBI" id="CHEBI:18420"/>
        <label>2</label>
    </ligand>
</feature>
<feature type="binding site" evidence="4">
    <location>
        <position position="219"/>
    </location>
    <ligand>
        <name>Mg(2+)</name>
        <dbReference type="ChEBI" id="CHEBI:18420"/>
        <label>2</label>
    </ligand>
</feature>
<feature type="binding site" evidence="1">
    <location>
        <begin position="263"/>
        <end position="264"/>
    </location>
    <ligand>
        <name>L-glutamate</name>
        <dbReference type="ChEBI" id="CHEBI:29985"/>
    </ligand>
</feature>
<feature type="binding site" evidence="2">
    <location>
        <position position="264"/>
    </location>
    <ligand>
        <name>L-glutamate</name>
        <dbReference type="ChEBI" id="CHEBI:29985"/>
    </ligand>
</feature>
<feature type="binding site" evidence="4">
    <location>
        <position position="268"/>
    </location>
    <ligand>
        <name>Mg(2+)</name>
        <dbReference type="ChEBI" id="CHEBI:18420"/>
        <label>1</label>
    </ligand>
</feature>
<feature type="binding site" evidence="1">
    <location>
        <begin position="270"/>
        <end position="272"/>
    </location>
    <ligand>
        <name>ATP</name>
        <dbReference type="ChEBI" id="CHEBI:30616"/>
    </ligand>
</feature>
<feature type="binding site" evidence="3">
    <location>
        <position position="272"/>
    </location>
    <ligand>
        <name>ATP</name>
        <dbReference type="ChEBI" id="CHEBI:30616"/>
    </ligand>
</feature>
<feature type="binding site" evidence="1">
    <location>
        <position position="320"/>
    </location>
    <ligand>
        <name>L-glutamate</name>
        <dbReference type="ChEBI" id="CHEBI:29985"/>
    </ligand>
</feature>
<feature type="binding site" evidence="1">
    <location>
        <position position="326"/>
    </location>
    <ligand>
        <name>L-glutamate</name>
        <dbReference type="ChEBI" id="CHEBI:29985"/>
    </ligand>
</feature>
<feature type="binding site" evidence="4">
    <location>
        <position position="338"/>
    </location>
    <ligand>
        <name>ATP</name>
        <dbReference type="ChEBI" id="CHEBI:30616"/>
    </ligand>
</feature>
<feature type="binding site" evidence="4">
    <location>
        <position position="338"/>
    </location>
    <ligand>
        <name>L-glutamate</name>
        <dbReference type="ChEBI" id="CHEBI:29985"/>
    </ligand>
</feature>
<feature type="binding site" evidence="4">
    <location>
        <position position="343"/>
    </location>
    <ligand>
        <name>ATP</name>
        <dbReference type="ChEBI" id="CHEBI:30616"/>
    </ligand>
</feature>
<feature type="binding site" evidence="3">
    <location>
        <position position="351"/>
    </location>
    <ligand>
        <name>ATP</name>
        <dbReference type="ChEBI" id="CHEBI:30616"/>
    </ligand>
</feature>
<feature type="binding site" evidence="4">
    <location>
        <position position="356"/>
    </location>
    <ligand>
        <name>Mg(2+)</name>
        <dbReference type="ChEBI" id="CHEBI:18420"/>
        <label>1</label>
    </ligand>
</feature>
<feature type="binding site" evidence="1">
    <location>
        <position position="358"/>
    </location>
    <ligand>
        <name>L-glutamate</name>
        <dbReference type="ChEBI" id="CHEBI:29985"/>
    </ligand>
</feature>
<feature type="modified residue" description="O-AMP-tyrosine" evidence="4">
    <location>
        <position position="396"/>
    </location>
</feature>
<name>GLN1B_AZOVI</name>
<proteinExistence type="inferred from homology"/>
<organism>
    <name type="scientific">Azotobacter vinelandii</name>
    <dbReference type="NCBI Taxonomy" id="354"/>
    <lineage>
        <taxon>Bacteria</taxon>
        <taxon>Pseudomonadati</taxon>
        <taxon>Pseudomonadota</taxon>
        <taxon>Gammaproteobacteria</taxon>
        <taxon>Pseudomonadales</taxon>
        <taxon>Pseudomonadaceae</taxon>
        <taxon>Azotobacter</taxon>
    </lineage>
</organism>
<reference key="1">
    <citation type="journal article" date="1990" name="J. Bacteriol.">
        <title>Molecular analysis of the Azotobacter vinelandii glnA gene encoding glutamine synthetase.</title>
        <authorList>
            <person name="Toukdarian A."/>
            <person name="Saunders G."/>
            <person name="Selman-Sosa G."/>
            <person name="Santero E."/>
            <person name="Woodley P."/>
            <person name="Kennedy C."/>
        </authorList>
    </citation>
    <scope>NUCLEOTIDE SEQUENCE [GENOMIC DNA]</scope>
</reference>
<comment type="function">
    <text evidence="1">Catalyzes the ATP-dependent biosynthesis of glutamine from glutamate and ammonia.</text>
</comment>
<comment type="catalytic activity">
    <reaction evidence="1">
        <text>L-glutamate + NH4(+) + ATP = L-glutamine + ADP + phosphate + H(+)</text>
        <dbReference type="Rhea" id="RHEA:16169"/>
        <dbReference type="ChEBI" id="CHEBI:15378"/>
        <dbReference type="ChEBI" id="CHEBI:28938"/>
        <dbReference type="ChEBI" id="CHEBI:29985"/>
        <dbReference type="ChEBI" id="CHEBI:30616"/>
        <dbReference type="ChEBI" id="CHEBI:43474"/>
        <dbReference type="ChEBI" id="CHEBI:58359"/>
        <dbReference type="ChEBI" id="CHEBI:456216"/>
        <dbReference type="EC" id="6.3.1.2"/>
    </reaction>
</comment>
<comment type="cofactor">
    <cofactor evidence="4">
        <name>Mg(2+)</name>
        <dbReference type="ChEBI" id="CHEBI:18420"/>
    </cofactor>
    <text evidence="4">Binds 2 Mg(2+) ions per subunit.</text>
</comment>
<comment type="activity regulation">
    <text evidence="5">The activity of this enzyme could be controlled by adenylation under conditions of abundant glutamine.</text>
</comment>
<comment type="subunit">
    <text evidence="1">Oligomer of 12 subunits arranged in the form of two hexameric ring.</text>
</comment>
<comment type="subcellular location">
    <subcellularLocation>
        <location evidence="4">Cytoplasm</location>
    </subcellularLocation>
</comment>
<comment type="similarity">
    <text evidence="8">Belongs to the glutamine synthetase family.</text>
</comment>
<evidence type="ECO:0000250" key="1">
    <source>
        <dbReference type="UniProtKB" id="P0A1P6"/>
    </source>
</evidence>
<evidence type="ECO:0000250" key="2">
    <source>
        <dbReference type="UniProtKB" id="P12425"/>
    </source>
</evidence>
<evidence type="ECO:0000250" key="3">
    <source>
        <dbReference type="UniProtKB" id="P77961"/>
    </source>
</evidence>
<evidence type="ECO:0000250" key="4">
    <source>
        <dbReference type="UniProtKB" id="P9WN39"/>
    </source>
</evidence>
<evidence type="ECO:0000250" key="5">
    <source>
        <dbReference type="UniProtKB" id="Q3V5W6"/>
    </source>
</evidence>
<evidence type="ECO:0000255" key="6">
    <source>
        <dbReference type="PROSITE-ProRule" id="PRU01330"/>
    </source>
</evidence>
<evidence type="ECO:0000255" key="7">
    <source>
        <dbReference type="PROSITE-ProRule" id="PRU01331"/>
    </source>
</evidence>
<evidence type="ECO:0000305" key="8"/>
<gene>
    <name evidence="1" type="primary">glnA</name>
</gene>